<protein>
    <recommendedName>
        <fullName>Homogentisate 1,2-dioxygenase</fullName>
        <ecNumber>1.13.11.5</ecNumber>
    </recommendedName>
    <alternativeName>
        <fullName>Homogentisate oxygenase</fullName>
    </alternativeName>
    <alternativeName>
        <fullName>Homogentisic acid oxidase</fullName>
    </alternativeName>
    <alternativeName>
        <fullName>Homogentisicase</fullName>
    </alternativeName>
</protein>
<comment type="catalytic activity">
    <reaction>
        <text>homogentisate + O2 = 4-maleylacetoacetate + H(+)</text>
        <dbReference type="Rhea" id="RHEA:15449"/>
        <dbReference type="ChEBI" id="CHEBI:15378"/>
        <dbReference type="ChEBI" id="CHEBI:15379"/>
        <dbReference type="ChEBI" id="CHEBI:16169"/>
        <dbReference type="ChEBI" id="CHEBI:17105"/>
        <dbReference type="EC" id="1.13.11.5"/>
    </reaction>
</comment>
<comment type="cofactor">
    <cofactor>
        <name>Fe cation</name>
        <dbReference type="ChEBI" id="CHEBI:24875"/>
    </cofactor>
</comment>
<comment type="pathway">
    <text>Amino-acid degradation; L-phenylalanine degradation; acetoacetate and fumarate from L-phenylalanine: step 4/6.</text>
</comment>
<comment type="similarity">
    <text evidence="2">Belongs to the homogentisate dioxygenase family.</text>
</comment>
<reference key="1">
    <citation type="submission" date="1996-12" db="EMBL/GenBank/DDBJ databases">
        <title>Cloning and characterization of the homogentisate 1,2-dioxygenase gene in A. thaliana and C. elegans.</title>
        <authorList>
            <person name="Schmidt S.R."/>
            <person name="Werner E."/>
            <person name="Mueller C.R."/>
            <person name="Kress W."/>
        </authorList>
    </citation>
    <scope>NUCLEOTIDE SEQUENCE [MRNA]</scope>
    <source>
        <strain>cv. Columbia</strain>
    </source>
</reference>
<reference key="2">
    <citation type="submission" date="1999-02" db="EMBL/GenBank/DDBJ databases">
        <authorList>
            <person name="Schmidt S.R."/>
        </authorList>
    </citation>
    <scope>NUCLEOTIDE SEQUENCE [GENOMIC DNA]</scope>
</reference>
<reference key="3">
    <citation type="journal article" date="2000" name="DNA Res.">
        <title>Structural analysis of Arabidopsis thaliana chromosome 5. X. Sequence features of the regions of 3,076,755 bp covered by sixty P1 and TAC clones.</title>
        <authorList>
            <person name="Sato S."/>
            <person name="Nakamura Y."/>
            <person name="Kaneko T."/>
            <person name="Katoh T."/>
            <person name="Asamizu E."/>
            <person name="Kotani H."/>
            <person name="Tabata S."/>
        </authorList>
    </citation>
    <scope>NUCLEOTIDE SEQUENCE [LARGE SCALE GENOMIC DNA]</scope>
    <source>
        <strain>cv. Columbia</strain>
    </source>
</reference>
<reference key="4">
    <citation type="journal article" date="2017" name="Plant J.">
        <title>Araport11: a complete reannotation of the Arabidopsis thaliana reference genome.</title>
        <authorList>
            <person name="Cheng C.Y."/>
            <person name="Krishnakumar V."/>
            <person name="Chan A.P."/>
            <person name="Thibaud-Nissen F."/>
            <person name="Schobel S."/>
            <person name="Town C.D."/>
        </authorList>
    </citation>
    <scope>GENOME REANNOTATION</scope>
    <source>
        <strain>cv. Columbia</strain>
    </source>
</reference>
<reference key="5">
    <citation type="journal article" date="2003" name="Science">
        <title>Empirical analysis of transcriptional activity in the Arabidopsis genome.</title>
        <authorList>
            <person name="Yamada K."/>
            <person name="Lim J."/>
            <person name="Dale J.M."/>
            <person name="Chen H."/>
            <person name="Shinn P."/>
            <person name="Palm C.J."/>
            <person name="Southwick A.M."/>
            <person name="Wu H.C."/>
            <person name="Kim C.J."/>
            <person name="Nguyen M."/>
            <person name="Pham P.K."/>
            <person name="Cheuk R.F."/>
            <person name="Karlin-Newmann G."/>
            <person name="Liu S.X."/>
            <person name="Lam B."/>
            <person name="Sakano H."/>
            <person name="Wu T."/>
            <person name="Yu G."/>
            <person name="Miranda M."/>
            <person name="Quach H.L."/>
            <person name="Tripp M."/>
            <person name="Chang C.H."/>
            <person name="Lee J.M."/>
            <person name="Toriumi M.J."/>
            <person name="Chan M.M."/>
            <person name="Tang C.C."/>
            <person name="Onodera C.S."/>
            <person name="Deng J.M."/>
            <person name="Akiyama K."/>
            <person name="Ansari Y."/>
            <person name="Arakawa T."/>
            <person name="Banh J."/>
            <person name="Banno F."/>
            <person name="Bowser L."/>
            <person name="Brooks S.Y."/>
            <person name="Carninci P."/>
            <person name="Chao Q."/>
            <person name="Choy N."/>
            <person name="Enju A."/>
            <person name="Goldsmith A.D."/>
            <person name="Gurjal M."/>
            <person name="Hansen N.F."/>
            <person name="Hayashizaki Y."/>
            <person name="Johnson-Hopson C."/>
            <person name="Hsuan V.W."/>
            <person name="Iida K."/>
            <person name="Karnes M."/>
            <person name="Khan S."/>
            <person name="Koesema E."/>
            <person name="Ishida J."/>
            <person name="Jiang P.X."/>
            <person name="Jones T."/>
            <person name="Kawai J."/>
            <person name="Kamiya A."/>
            <person name="Meyers C."/>
            <person name="Nakajima M."/>
            <person name="Narusaka M."/>
            <person name="Seki M."/>
            <person name="Sakurai T."/>
            <person name="Satou M."/>
            <person name="Tamse R."/>
            <person name="Vaysberg M."/>
            <person name="Wallender E.K."/>
            <person name="Wong C."/>
            <person name="Yamamura Y."/>
            <person name="Yuan S."/>
            <person name="Shinozaki K."/>
            <person name="Davis R.W."/>
            <person name="Theologis A."/>
            <person name="Ecker J.R."/>
        </authorList>
    </citation>
    <scope>NUCLEOTIDE SEQUENCE [LARGE SCALE MRNA]</scope>
    <source>
        <strain>cv. Columbia</strain>
    </source>
</reference>
<reference key="6">
    <citation type="submission" date="2002-03" db="EMBL/GenBank/DDBJ databases">
        <title>Full-length cDNA from Arabidopsis thaliana.</title>
        <authorList>
            <person name="Brover V.V."/>
            <person name="Troukhan M.E."/>
            <person name="Alexandrov N.A."/>
            <person name="Lu Y.-P."/>
            <person name="Flavell R.B."/>
            <person name="Feldmann K.A."/>
        </authorList>
    </citation>
    <scope>NUCLEOTIDE SEQUENCE [LARGE SCALE MRNA]</scope>
</reference>
<name>HGD_ARATH</name>
<organism>
    <name type="scientific">Arabidopsis thaliana</name>
    <name type="common">Mouse-ear cress</name>
    <dbReference type="NCBI Taxonomy" id="3702"/>
    <lineage>
        <taxon>Eukaryota</taxon>
        <taxon>Viridiplantae</taxon>
        <taxon>Streptophyta</taxon>
        <taxon>Embryophyta</taxon>
        <taxon>Tracheophyta</taxon>
        <taxon>Spermatophyta</taxon>
        <taxon>Magnoliopsida</taxon>
        <taxon>eudicotyledons</taxon>
        <taxon>Gunneridae</taxon>
        <taxon>Pentapetalae</taxon>
        <taxon>rosids</taxon>
        <taxon>malvids</taxon>
        <taxon>Brassicales</taxon>
        <taxon>Brassicaceae</taxon>
        <taxon>Camelineae</taxon>
        <taxon>Arabidopsis</taxon>
    </lineage>
</organism>
<evidence type="ECO:0000250" key="1"/>
<evidence type="ECO:0000305" key="2"/>
<gene>
    <name type="primary">HGO</name>
    <name type="ordered locus">At5g54080</name>
    <name type="ORF">MJP23.6</name>
</gene>
<sequence>MEEKKKELEELKYQSGFGNHFSSEAIAGALPLDQNSPLLCPYGLYAEQISGTSFTSPRKLNQRSWLYRVKPSVTHEPFKPRVPAHKKLVSEFDASNSRTNPTQLRWRPEDIPDSEIDFVDGLFTICGAGSSFLRHGFAIHMYVANTGMKDSAFCNADGDFLLVPQTGRLWIETECGRLLVTPGEIAVIPQGFRFSIDLPDGKSRGYVAEIYGAHFQLPDLGPIGANGLAASRDFLAPTAWFEDGLRPEYTIVQKFGGELFTAKQDFSPFNVVAWHGNYVPYKYDLKKFCPYNTVLLDHGDPSINTVLTAPTDKPGVALLDFVIFPPRWLVAEHTFRPPYYHRNCMSEFMGLIYGAYEAKADGFLPGGASLHSCMTPHGPDTTTYEATIARVNAMAPSKLTGTMAFMFESALIPRVCHWALESPFLDHDYYQCWIGLKSHFSRISLDKTNVESTEKEPGASE</sequence>
<keyword id="KW-0223">Dioxygenase</keyword>
<keyword id="KW-0408">Iron</keyword>
<keyword id="KW-0479">Metal-binding</keyword>
<keyword id="KW-0560">Oxidoreductase</keyword>
<keyword id="KW-0585">Phenylalanine catabolism</keyword>
<keyword id="KW-1185">Reference proteome</keyword>
<keyword id="KW-0828">Tyrosine catabolism</keyword>
<dbReference type="EC" id="1.13.11.5"/>
<dbReference type="EMBL" id="U80668">
    <property type="protein sequence ID" value="AAD00360.1"/>
    <property type="molecule type" value="mRNA"/>
</dbReference>
<dbReference type="EMBL" id="AF130845">
    <property type="protein sequence ID" value="AAF36499.1"/>
    <property type="molecule type" value="Genomic_DNA"/>
</dbReference>
<dbReference type="EMBL" id="AB018115">
    <property type="protein sequence ID" value="BAA97130.1"/>
    <property type="molecule type" value="Genomic_DNA"/>
</dbReference>
<dbReference type="EMBL" id="CP002688">
    <property type="protein sequence ID" value="AED96447.1"/>
    <property type="molecule type" value="Genomic_DNA"/>
</dbReference>
<dbReference type="EMBL" id="CP002688">
    <property type="protein sequence ID" value="AED96448.1"/>
    <property type="molecule type" value="Genomic_DNA"/>
</dbReference>
<dbReference type="EMBL" id="AY140075">
    <property type="protein sequence ID" value="AAM98216.1"/>
    <property type="molecule type" value="mRNA"/>
</dbReference>
<dbReference type="EMBL" id="BT010329">
    <property type="protein sequence ID" value="AAQ55280.1"/>
    <property type="molecule type" value="mRNA"/>
</dbReference>
<dbReference type="EMBL" id="AY088421">
    <property type="protein sequence ID" value="AAM65958.1"/>
    <property type="molecule type" value="mRNA"/>
</dbReference>
<dbReference type="RefSeq" id="NP_200219.1">
    <property type="nucleotide sequence ID" value="NM_124787.4"/>
</dbReference>
<dbReference type="RefSeq" id="NP_851187.1">
    <property type="nucleotide sequence ID" value="NM_180856.4"/>
</dbReference>
<dbReference type="SMR" id="Q9ZRA2"/>
<dbReference type="FunCoup" id="Q9ZRA2">
    <property type="interactions" value="303"/>
</dbReference>
<dbReference type="STRING" id="3702.Q9ZRA2"/>
<dbReference type="GlyGen" id="Q9ZRA2">
    <property type="glycosylation" value="1 site"/>
</dbReference>
<dbReference type="iPTMnet" id="Q9ZRA2"/>
<dbReference type="PaxDb" id="3702-AT5G54080.2"/>
<dbReference type="ProteomicsDB" id="230235"/>
<dbReference type="EnsemblPlants" id="AT5G54080.1">
    <property type="protein sequence ID" value="AT5G54080.1"/>
    <property type="gene ID" value="AT5G54080"/>
</dbReference>
<dbReference type="EnsemblPlants" id="AT5G54080.2">
    <property type="protein sequence ID" value="AT5G54080.2"/>
    <property type="gene ID" value="AT5G54080"/>
</dbReference>
<dbReference type="GeneID" id="835494"/>
<dbReference type="Gramene" id="AT5G54080.1">
    <property type="protein sequence ID" value="AT5G54080.1"/>
    <property type="gene ID" value="AT5G54080"/>
</dbReference>
<dbReference type="Gramene" id="AT5G54080.2">
    <property type="protein sequence ID" value="AT5G54080.2"/>
    <property type="gene ID" value="AT5G54080"/>
</dbReference>
<dbReference type="KEGG" id="ath:AT5G54080"/>
<dbReference type="Araport" id="AT5G54080"/>
<dbReference type="TAIR" id="AT5G54080">
    <property type="gene designation" value="HGO"/>
</dbReference>
<dbReference type="eggNOG" id="KOG1417">
    <property type="taxonomic scope" value="Eukaryota"/>
</dbReference>
<dbReference type="HOGENOM" id="CLU_027174_0_0_1"/>
<dbReference type="InParanoid" id="Q9ZRA2"/>
<dbReference type="OMA" id="MLPHGPD"/>
<dbReference type="PhylomeDB" id="Q9ZRA2"/>
<dbReference type="BioCyc" id="ARA:AT5G54080-MONOMER"/>
<dbReference type="BRENDA" id="1.13.11.5">
    <property type="organism ID" value="399"/>
</dbReference>
<dbReference type="UniPathway" id="UPA00139">
    <property type="reaction ID" value="UER00339"/>
</dbReference>
<dbReference type="PRO" id="PR:Q9ZRA2"/>
<dbReference type="Proteomes" id="UP000006548">
    <property type="component" value="Chromosome 5"/>
</dbReference>
<dbReference type="ExpressionAtlas" id="Q9ZRA2">
    <property type="expression patterns" value="baseline and differential"/>
</dbReference>
<dbReference type="GO" id="GO:0009536">
    <property type="term" value="C:plastid"/>
    <property type="evidence" value="ECO:0007005"/>
    <property type="project" value="TAIR"/>
</dbReference>
<dbReference type="GO" id="GO:0004411">
    <property type="term" value="F:homogentisate 1,2-dioxygenase activity"/>
    <property type="evidence" value="ECO:0000314"/>
    <property type="project" value="TAIR"/>
</dbReference>
<dbReference type="GO" id="GO:0046872">
    <property type="term" value="F:metal ion binding"/>
    <property type="evidence" value="ECO:0007669"/>
    <property type="project" value="UniProtKB-KW"/>
</dbReference>
<dbReference type="GO" id="GO:1902000">
    <property type="term" value="P:homogentisate catabolic process"/>
    <property type="evidence" value="ECO:0000314"/>
    <property type="project" value="TAIR"/>
</dbReference>
<dbReference type="GO" id="GO:0006559">
    <property type="term" value="P:L-phenylalanine catabolic process"/>
    <property type="evidence" value="ECO:0007669"/>
    <property type="project" value="UniProtKB-UniPathway"/>
</dbReference>
<dbReference type="GO" id="GO:0006572">
    <property type="term" value="P:tyrosine catabolic process"/>
    <property type="evidence" value="ECO:0000316"/>
    <property type="project" value="TAIR"/>
</dbReference>
<dbReference type="CDD" id="cd07000">
    <property type="entry name" value="cupin_HGO_N"/>
    <property type="match status" value="1"/>
</dbReference>
<dbReference type="FunFam" id="2.60.120.10:FF:000069">
    <property type="entry name" value="Homogentisate 1,2-dioxygenase"/>
    <property type="match status" value="1"/>
</dbReference>
<dbReference type="Gene3D" id="2.60.120.10">
    <property type="entry name" value="Jelly Rolls"/>
    <property type="match status" value="1"/>
</dbReference>
<dbReference type="InterPro" id="IPR046451">
    <property type="entry name" value="HgmA_C"/>
</dbReference>
<dbReference type="InterPro" id="IPR046452">
    <property type="entry name" value="HgmA_N"/>
</dbReference>
<dbReference type="InterPro" id="IPR005708">
    <property type="entry name" value="Homogentis_dOase"/>
</dbReference>
<dbReference type="InterPro" id="IPR014710">
    <property type="entry name" value="RmlC-like_jellyroll"/>
</dbReference>
<dbReference type="InterPro" id="IPR011051">
    <property type="entry name" value="RmlC_Cupin_sf"/>
</dbReference>
<dbReference type="NCBIfam" id="TIGR01015">
    <property type="entry name" value="hmgA"/>
    <property type="match status" value="1"/>
</dbReference>
<dbReference type="PANTHER" id="PTHR11056">
    <property type="entry name" value="HOMOGENTISATE 1,2-DIOXYGENASE"/>
    <property type="match status" value="1"/>
</dbReference>
<dbReference type="PANTHER" id="PTHR11056:SF0">
    <property type="entry name" value="HOMOGENTISATE 1,2-DIOXYGENASE"/>
    <property type="match status" value="1"/>
</dbReference>
<dbReference type="Pfam" id="PF04209">
    <property type="entry name" value="HgmA_C"/>
    <property type="match status" value="1"/>
</dbReference>
<dbReference type="Pfam" id="PF20510">
    <property type="entry name" value="HgmA_N"/>
    <property type="match status" value="1"/>
</dbReference>
<dbReference type="SUPFAM" id="SSF51182">
    <property type="entry name" value="RmlC-like cupins"/>
    <property type="match status" value="1"/>
</dbReference>
<feature type="chain" id="PRO_0000220244" description="Homogentisate 1,2-dioxygenase">
    <location>
        <begin position="1"/>
        <end position="461"/>
    </location>
</feature>
<feature type="binding site" evidence="1">
    <location>
        <position position="341"/>
    </location>
    <ligand>
        <name>Fe cation</name>
        <dbReference type="ChEBI" id="CHEBI:24875"/>
    </ligand>
</feature>
<feature type="binding site" evidence="1">
    <location>
        <position position="347"/>
    </location>
    <ligand>
        <name>Fe cation</name>
        <dbReference type="ChEBI" id="CHEBI:24875"/>
    </ligand>
</feature>
<feature type="binding site" evidence="1">
    <location>
        <position position="377"/>
    </location>
    <ligand>
        <name>Fe cation</name>
        <dbReference type="ChEBI" id="CHEBI:24875"/>
    </ligand>
</feature>
<feature type="sequence conflict" description="In Ref. 6; AAM65958." evidence="2" ref="6">
    <original>E</original>
    <variation>K</variation>
    <location>
        <position position="7"/>
    </location>
</feature>
<feature type="sequence conflict" description="In Ref. 6; AAM65958." evidence="2" ref="6">
    <original>V</original>
    <variation>I</variation>
    <location>
        <position position="69"/>
    </location>
</feature>
<feature type="sequence conflict" description="In Ref. 6; AAM65958." evidence="2" ref="6">
    <original>I</original>
    <variation>T</variation>
    <location>
        <position position="116"/>
    </location>
</feature>
<feature type="sequence conflict" description="In Ref. 6; AAM65958." evidence="2" ref="6">
    <original>T</original>
    <variation>K</variation>
    <location>
        <position position="146"/>
    </location>
</feature>
<feature type="sequence conflict" description="In Ref. 6; AAM65958." evidence="2" ref="6">
    <original>T</original>
    <variation>S</variation>
    <location>
        <position position="181"/>
    </location>
</feature>
<feature type="sequence conflict" description="In Ref. 6; AAM65958." evidence="2" ref="6">
    <original>S</original>
    <variation>P</variation>
    <location>
        <position position="231"/>
    </location>
</feature>
<feature type="sequence conflict" description="In Ref. 1; AAD00360." evidence="2" ref="1">
    <original>D</original>
    <variation>E</variation>
    <location>
        <position position="428"/>
    </location>
</feature>
<feature type="sequence conflict" description="In Ref. 6; AAM65958." evidence="2" ref="6">
    <original>S</original>
    <variation>P</variation>
    <location>
        <position position="452"/>
    </location>
</feature>
<accession>Q9ZRA2</accession>
<accession>Q8L9I0</accession>
<accession>Q9LDB8</accession>
<proteinExistence type="evidence at transcript level"/>